<keyword id="KW-0227">DNA damage</keyword>
<keyword id="KW-0234">DNA repair</keyword>
<keyword id="KW-0238">DNA-binding</keyword>
<keyword id="KW-0326">Glycosidase</keyword>
<keyword id="KW-0378">Hydrolase</keyword>
<keyword id="KW-0456">Lyase</keyword>
<keyword id="KW-0479">Metal-binding</keyword>
<keyword id="KW-0511">Multifunctional enzyme</keyword>
<keyword id="KW-0862">Zinc</keyword>
<keyword id="KW-0863">Zinc-finger</keyword>
<comment type="function">
    <text evidence="2">Involved in base excision repair of DNA damaged by oxidation or by mutagenic agents. Acts as a DNA glycosylase that recognizes and removes damaged bases. Has a preference for oxidized purines, such as 7,8-dihydro-8-oxoguanine (8-oxoG). Has AP (apurinic/apyrimidinic) lyase activity and introduces nicks in the DNA strand. Cleaves the DNA backbone by beta-delta elimination to generate a single-strand break at the site of the removed base with both 3'- and 5'-phosphates.</text>
</comment>
<comment type="catalytic activity">
    <reaction evidence="2">
        <text>Hydrolysis of DNA containing ring-opened 7-methylguanine residues, releasing 2,6-diamino-4-hydroxy-5-(N-methyl)formamidopyrimidine.</text>
        <dbReference type="EC" id="3.2.2.23"/>
    </reaction>
</comment>
<comment type="catalytic activity">
    <reaction evidence="2">
        <text>2'-deoxyribonucleotide-(2'-deoxyribose 5'-phosphate)-2'-deoxyribonucleotide-DNA = a 3'-end 2'-deoxyribonucleotide-(2,3-dehydro-2,3-deoxyribose 5'-phosphate)-DNA + a 5'-end 5'-phospho-2'-deoxyribonucleoside-DNA + H(+)</text>
        <dbReference type="Rhea" id="RHEA:66592"/>
        <dbReference type="Rhea" id="RHEA-COMP:13180"/>
        <dbReference type="Rhea" id="RHEA-COMP:16897"/>
        <dbReference type="Rhea" id="RHEA-COMP:17067"/>
        <dbReference type="ChEBI" id="CHEBI:15378"/>
        <dbReference type="ChEBI" id="CHEBI:136412"/>
        <dbReference type="ChEBI" id="CHEBI:157695"/>
        <dbReference type="ChEBI" id="CHEBI:167181"/>
        <dbReference type="EC" id="4.2.99.18"/>
    </reaction>
</comment>
<comment type="cofactor">
    <cofactor evidence="2">
        <name>Zn(2+)</name>
        <dbReference type="ChEBI" id="CHEBI:29105"/>
    </cofactor>
    <text evidence="2">Binds 1 zinc ion per subunit.</text>
</comment>
<comment type="subunit">
    <text evidence="2">Monomer.</text>
</comment>
<comment type="similarity">
    <text evidence="2">Belongs to the FPG family.</text>
</comment>
<protein>
    <recommendedName>
        <fullName evidence="2">Formamidopyrimidine-DNA glycosylase</fullName>
        <shortName evidence="2">Fapy-DNA glycosylase</shortName>
        <ecNumber evidence="2">3.2.2.23</ecNumber>
    </recommendedName>
    <alternativeName>
        <fullName evidence="2">DNA-(apurinic or apyrimidinic site) lyase MutM</fullName>
        <shortName evidence="2">AP lyase MutM</shortName>
        <ecNumber evidence="2">4.2.99.18</ecNumber>
    </alternativeName>
</protein>
<name>FPG_RHIJ3</name>
<reference key="1">
    <citation type="journal article" date="2006" name="Genome Biol.">
        <title>The genome of Rhizobium leguminosarum has recognizable core and accessory components.</title>
        <authorList>
            <person name="Young J.P.W."/>
            <person name="Crossman L.C."/>
            <person name="Johnston A.W.B."/>
            <person name="Thomson N.R."/>
            <person name="Ghazoui Z.F."/>
            <person name="Hull K.H."/>
            <person name="Wexler M."/>
            <person name="Curson A.R.J."/>
            <person name="Todd J.D."/>
            <person name="Poole P.S."/>
            <person name="Mauchline T.H."/>
            <person name="East A.K."/>
            <person name="Quail M.A."/>
            <person name="Churcher C."/>
            <person name="Arrowsmith C."/>
            <person name="Cherevach I."/>
            <person name="Chillingworth T."/>
            <person name="Clarke K."/>
            <person name="Cronin A."/>
            <person name="Davis P."/>
            <person name="Fraser A."/>
            <person name="Hance Z."/>
            <person name="Hauser H."/>
            <person name="Jagels K."/>
            <person name="Moule S."/>
            <person name="Mungall K."/>
            <person name="Norbertczak H."/>
            <person name="Rabbinowitsch E."/>
            <person name="Sanders M."/>
            <person name="Simmonds M."/>
            <person name="Whitehead S."/>
            <person name="Parkhill J."/>
        </authorList>
    </citation>
    <scope>NUCLEOTIDE SEQUENCE [LARGE SCALE GENOMIC DNA]</scope>
    <source>
        <strain>DSM 114642 / LMG 32736 / 3841</strain>
    </source>
</reference>
<sequence length="296" mass="32322">MPELPEVETVKRGLTPAMEGTRVTRLELRRGDLRFPFPDAFADRVSGRTIVGLGRRAKYLLVDLDDGNTLISHLGMSGSFRIEEGAASGVPGEFHHARSKDEKHDHVVFHLQAASGLRRVVYNDPRRFGFMDMVGRADLATHPFFRDLGPEPTGNELSAAYLAERFRDKAQPLKSALLDQKNIAGLGNIYVCEALWRSHLSPIRAAGTLVTAGGRPKAQLDLLVASIRDVIADAIAAGGSSLRDHIQTDGSLGYFQHSFSVYDRESQACRTPGCGGTVARIVQAGRSTFYCATCQK</sequence>
<gene>
    <name evidence="2" type="primary">mutM</name>
    <name evidence="2" type="synonym">fpg</name>
    <name type="ordered locus">RL0372</name>
</gene>
<feature type="initiator methionine" description="Removed" evidence="1">
    <location>
        <position position="1"/>
    </location>
</feature>
<feature type="chain" id="PRO_1000008751" description="Formamidopyrimidine-DNA glycosylase">
    <location>
        <begin position="2"/>
        <end position="296"/>
    </location>
</feature>
<feature type="zinc finger region" description="FPG-type" evidence="2">
    <location>
        <begin position="260"/>
        <end position="296"/>
    </location>
</feature>
<feature type="active site" description="Schiff-base intermediate with DNA" evidence="2">
    <location>
        <position position="2"/>
    </location>
</feature>
<feature type="active site" description="Proton donor" evidence="2">
    <location>
        <position position="3"/>
    </location>
</feature>
<feature type="active site" description="Proton donor; for beta-elimination activity" evidence="2">
    <location>
        <position position="58"/>
    </location>
</feature>
<feature type="active site" description="Proton donor; for delta-elimination activity" evidence="2">
    <location>
        <position position="286"/>
    </location>
</feature>
<feature type="binding site" evidence="2">
    <location>
        <position position="104"/>
    </location>
    <ligand>
        <name>DNA</name>
        <dbReference type="ChEBI" id="CHEBI:16991"/>
    </ligand>
</feature>
<feature type="binding site" evidence="2">
    <location>
        <position position="126"/>
    </location>
    <ligand>
        <name>DNA</name>
        <dbReference type="ChEBI" id="CHEBI:16991"/>
    </ligand>
</feature>
<feature type="binding site" evidence="2">
    <location>
        <position position="169"/>
    </location>
    <ligand>
        <name>DNA</name>
        <dbReference type="ChEBI" id="CHEBI:16991"/>
    </ligand>
</feature>
<dbReference type="EC" id="3.2.2.23" evidence="2"/>
<dbReference type="EC" id="4.2.99.18" evidence="2"/>
<dbReference type="EMBL" id="AM236080">
    <property type="protein sequence ID" value="CAK05863.1"/>
    <property type="molecule type" value="Genomic_DNA"/>
</dbReference>
<dbReference type="RefSeq" id="WP_011650174.1">
    <property type="nucleotide sequence ID" value="NC_008380.1"/>
</dbReference>
<dbReference type="SMR" id="Q1MMD9"/>
<dbReference type="EnsemblBacteria" id="CAK05863">
    <property type="protein sequence ID" value="CAK05863"/>
    <property type="gene ID" value="RL0372"/>
</dbReference>
<dbReference type="KEGG" id="rle:RL0372"/>
<dbReference type="eggNOG" id="COG0266">
    <property type="taxonomic scope" value="Bacteria"/>
</dbReference>
<dbReference type="HOGENOM" id="CLU_038423_1_1_5"/>
<dbReference type="Proteomes" id="UP000006575">
    <property type="component" value="Chromosome"/>
</dbReference>
<dbReference type="GO" id="GO:0034039">
    <property type="term" value="F:8-oxo-7,8-dihydroguanine DNA N-glycosylase activity"/>
    <property type="evidence" value="ECO:0007669"/>
    <property type="project" value="TreeGrafter"/>
</dbReference>
<dbReference type="GO" id="GO:0140078">
    <property type="term" value="F:class I DNA-(apurinic or apyrimidinic site) endonuclease activity"/>
    <property type="evidence" value="ECO:0007669"/>
    <property type="project" value="UniProtKB-EC"/>
</dbReference>
<dbReference type="GO" id="GO:0003684">
    <property type="term" value="F:damaged DNA binding"/>
    <property type="evidence" value="ECO:0007669"/>
    <property type="project" value="InterPro"/>
</dbReference>
<dbReference type="GO" id="GO:0008270">
    <property type="term" value="F:zinc ion binding"/>
    <property type="evidence" value="ECO:0007669"/>
    <property type="project" value="UniProtKB-UniRule"/>
</dbReference>
<dbReference type="GO" id="GO:0006284">
    <property type="term" value="P:base-excision repair"/>
    <property type="evidence" value="ECO:0007669"/>
    <property type="project" value="InterPro"/>
</dbReference>
<dbReference type="CDD" id="cd08966">
    <property type="entry name" value="EcFpg-like_N"/>
    <property type="match status" value="1"/>
</dbReference>
<dbReference type="FunFam" id="1.10.8.50:FF:000003">
    <property type="entry name" value="Formamidopyrimidine-DNA glycosylase"/>
    <property type="match status" value="1"/>
</dbReference>
<dbReference type="Gene3D" id="1.10.8.50">
    <property type="match status" value="1"/>
</dbReference>
<dbReference type="Gene3D" id="3.20.190.10">
    <property type="entry name" value="MutM-like, N-terminal"/>
    <property type="match status" value="1"/>
</dbReference>
<dbReference type="HAMAP" id="MF_00103">
    <property type="entry name" value="Fapy_DNA_glycosyl"/>
    <property type="match status" value="1"/>
</dbReference>
<dbReference type="InterPro" id="IPR015886">
    <property type="entry name" value="DNA_glyclase/AP_lyase_DNA-bd"/>
</dbReference>
<dbReference type="InterPro" id="IPR015887">
    <property type="entry name" value="DNA_glyclase_Znf_dom_DNA_BS"/>
</dbReference>
<dbReference type="InterPro" id="IPR020629">
    <property type="entry name" value="Formamido-pyr_DNA_Glyclase"/>
</dbReference>
<dbReference type="InterPro" id="IPR012319">
    <property type="entry name" value="FPG_cat"/>
</dbReference>
<dbReference type="InterPro" id="IPR035937">
    <property type="entry name" value="MutM-like_N-ter"/>
</dbReference>
<dbReference type="InterPro" id="IPR010979">
    <property type="entry name" value="Ribosomal_uS13-like_H2TH"/>
</dbReference>
<dbReference type="InterPro" id="IPR000214">
    <property type="entry name" value="Znf_DNA_glyclase/AP_lyase"/>
</dbReference>
<dbReference type="InterPro" id="IPR010663">
    <property type="entry name" value="Znf_FPG/IleRS"/>
</dbReference>
<dbReference type="NCBIfam" id="TIGR00577">
    <property type="entry name" value="fpg"/>
    <property type="match status" value="1"/>
</dbReference>
<dbReference type="NCBIfam" id="NF002211">
    <property type="entry name" value="PRK01103.1"/>
    <property type="match status" value="1"/>
</dbReference>
<dbReference type="PANTHER" id="PTHR22993">
    <property type="entry name" value="FORMAMIDOPYRIMIDINE-DNA GLYCOSYLASE"/>
    <property type="match status" value="1"/>
</dbReference>
<dbReference type="PANTHER" id="PTHR22993:SF9">
    <property type="entry name" value="FORMAMIDOPYRIMIDINE-DNA GLYCOSYLASE"/>
    <property type="match status" value="1"/>
</dbReference>
<dbReference type="Pfam" id="PF01149">
    <property type="entry name" value="Fapy_DNA_glyco"/>
    <property type="match status" value="1"/>
</dbReference>
<dbReference type="Pfam" id="PF06831">
    <property type="entry name" value="H2TH"/>
    <property type="match status" value="1"/>
</dbReference>
<dbReference type="Pfam" id="PF06827">
    <property type="entry name" value="zf-FPG_IleRS"/>
    <property type="match status" value="1"/>
</dbReference>
<dbReference type="SMART" id="SM00898">
    <property type="entry name" value="Fapy_DNA_glyco"/>
    <property type="match status" value="1"/>
</dbReference>
<dbReference type="SMART" id="SM01232">
    <property type="entry name" value="H2TH"/>
    <property type="match status" value="1"/>
</dbReference>
<dbReference type="SUPFAM" id="SSF57716">
    <property type="entry name" value="Glucocorticoid receptor-like (DNA-binding domain)"/>
    <property type="match status" value="1"/>
</dbReference>
<dbReference type="SUPFAM" id="SSF81624">
    <property type="entry name" value="N-terminal domain of MutM-like DNA repair proteins"/>
    <property type="match status" value="1"/>
</dbReference>
<dbReference type="SUPFAM" id="SSF46946">
    <property type="entry name" value="S13-like H2TH domain"/>
    <property type="match status" value="1"/>
</dbReference>
<dbReference type="PROSITE" id="PS51068">
    <property type="entry name" value="FPG_CAT"/>
    <property type="match status" value="1"/>
</dbReference>
<dbReference type="PROSITE" id="PS01242">
    <property type="entry name" value="ZF_FPG_1"/>
    <property type="match status" value="1"/>
</dbReference>
<dbReference type="PROSITE" id="PS51066">
    <property type="entry name" value="ZF_FPG_2"/>
    <property type="match status" value="1"/>
</dbReference>
<organism>
    <name type="scientific">Rhizobium johnstonii (strain DSM 114642 / LMG 32736 / 3841)</name>
    <name type="common">Rhizobium leguminosarum bv. viciae</name>
    <dbReference type="NCBI Taxonomy" id="216596"/>
    <lineage>
        <taxon>Bacteria</taxon>
        <taxon>Pseudomonadati</taxon>
        <taxon>Pseudomonadota</taxon>
        <taxon>Alphaproteobacteria</taxon>
        <taxon>Hyphomicrobiales</taxon>
        <taxon>Rhizobiaceae</taxon>
        <taxon>Rhizobium/Agrobacterium group</taxon>
        <taxon>Rhizobium</taxon>
        <taxon>Rhizobium johnstonii</taxon>
    </lineage>
</organism>
<accession>Q1MMD9</accession>
<proteinExistence type="inferred from homology"/>
<evidence type="ECO:0000250" key="1"/>
<evidence type="ECO:0000255" key="2">
    <source>
        <dbReference type="HAMAP-Rule" id="MF_00103"/>
    </source>
</evidence>